<gene>
    <name evidence="1" type="primary">recR</name>
    <name type="synonym">recD</name>
    <name type="synonym">recM</name>
    <name type="ordered locus">SAR0479</name>
</gene>
<sequence>MHYPEPISKLINSFMKLPGIGPKTAQRLAFHTLDMKEDDVVQFAKALVDVKRELTYCSVCGHITENDPCYICEDKQRDRSVICVVEDDKDVIAMEKMREYKGLYHVLHGSISPMDGIGPEDINIPSLIERLKNDEVSELILAMNPNLEGESTAMYISRLVKPIGIKVTRLAQGLSVGGDLEYADEVTLSKAIAGRTEM</sequence>
<proteinExistence type="inferred from homology"/>
<name>RECR_STAAR</name>
<accession>Q6GJJ3</accession>
<organism>
    <name type="scientific">Staphylococcus aureus (strain MRSA252)</name>
    <dbReference type="NCBI Taxonomy" id="282458"/>
    <lineage>
        <taxon>Bacteria</taxon>
        <taxon>Bacillati</taxon>
        <taxon>Bacillota</taxon>
        <taxon>Bacilli</taxon>
        <taxon>Bacillales</taxon>
        <taxon>Staphylococcaceae</taxon>
        <taxon>Staphylococcus</taxon>
    </lineage>
</organism>
<protein>
    <recommendedName>
        <fullName evidence="1">Recombination protein RecR</fullName>
    </recommendedName>
</protein>
<dbReference type="EMBL" id="BX571856">
    <property type="protein sequence ID" value="CAG39501.1"/>
    <property type="molecule type" value="Genomic_DNA"/>
</dbReference>
<dbReference type="RefSeq" id="WP_000559172.1">
    <property type="nucleotide sequence ID" value="NC_002952.2"/>
</dbReference>
<dbReference type="SMR" id="Q6GJJ3"/>
<dbReference type="KEGG" id="sar:SAR0479"/>
<dbReference type="HOGENOM" id="CLU_060739_1_0_9"/>
<dbReference type="Proteomes" id="UP000000596">
    <property type="component" value="Chromosome"/>
</dbReference>
<dbReference type="GO" id="GO:0003677">
    <property type="term" value="F:DNA binding"/>
    <property type="evidence" value="ECO:0007669"/>
    <property type="project" value="UniProtKB-UniRule"/>
</dbReference>
<dbReference type="GO" id="GO:0008270">
    <property type="term" value="F:zinc ion binding"/>
    <property type="evidence" value="ECO:0007669"/>
    <property type="project" value="UniProtKB-KW"/>
</dbReference>
<dbReference type="GO" id="GO:0006310">
    <property type="term" value="P:DNA recombination"/>
    <property type="evidence" value="ECO:0007669"/>
    <property type="project" value="UniProtKB-UniRule"/>
</dbReference>
<dbReference type="GO" id="GO:0006281">
    <property type="term" value="P:DNA repair"/>
    <property type="evidence" value="ECO:0007669"/>
    <property type="project" value="UniProtKB-UniRule"/>
</dbReference>
<dbReference type="CDD" id="cd01025">
    <property type="entry name" value="TOPRIM_recR"/>
    <property type="match status" value="1"/>
</dbReference>
<dbReference type="Gene3D" id="3.30.60.80">
    <property type="match status" value="1"/>
</dbReference>
<dbReference type="Gene3D" id="3.40.1360.10">
    <property type="match status" value="1"/>
</dbReference>
<dbReference type="Gene3D" id="6.10.250.240">
    <property type="match status" value="1"/>
</dbReference>
<dbReference type="Gene3D" id="1.10.8.420">
    <property type="entry name" value="RecR Domain 1"/>
    <property type="match status" value="1"/>
</dbReference>
<dbReference type="HAMAP" id="MF_00017">
    <property type="entry name" value="RecR"/>
    <property type="match status" value="1"/>
</dbReference>
<dbReference type="InterPro" id="IPR000093">
    <property type="entry name" value="DNA_Rcmb_RecR"/>
</dbReference>
<dbReference type="InterPro" id="IPR023627">
    <property type="entry name" value="Rcmb_RecR"/>
</dbReference>
<dbReference type="InterPro" id="IPR015967">
    <property type="entry name" value="Rcmb_RecR_Znf"/>
</dbReference>
<dbReference type="InterPro" id="IPR006171">
    <property type="entry name" value="TOPRIM_dom"/>
</dbReference>
<dbReference type="InterPro" id="IPR034137">
    <property type="entry name" value="TOPRIM_RecR"/>
</dbReference>
<dbReference type="NCBIfam" id="TIGR00615">
    <property type="entry name" value="recR"/>
    <property type="match status" value="1"/>
</dbReference>
<dbReference type="PANTHER" id="PTHR30446">
    <property type="entry name" value="RECOMBINATION PROTEIN RECR"/>
    <property type="match status" value="1"/>
</dbReference>
<dbReference type="PANTHER" id="PTHR30446:SF0">
    <property type="entry name" value="RECOMBINATION PROTEIN RECR"/>
    <property type="match status" value="1"/>
</dbReference>
<dbReference type="Pfam" id="PF21175">
    <property type="entry name" value="RecR_C"/>
    <property type="match status" value="1"/>
</dbReference>
<dbReference type="Pfam" id="PF21176">
    <property type="entry name" value="RecR_HhH"/>
    <property type="match status" value="1"/>
</dbReference>
<dbReference type="Pfam" id="PF02132">
    <property type="entry name" value="RecR_ZnF"/>
    <property type="match status" value="1"/>
</dbReference>
<dbReference type="Pfam" id="PF13662">
    <property type="entry name" value="Toprim_4"/>
    <property type="match status" value="1"/>
</dbReference>
<dbReference type="SMART" id="SM00493">
    <property type="entry name" value="TOPRIM"/>
    <property type="match status" value="1"/>
</dbReference>
<dbReference type="SUPFAM" id="SSF111304">
    <property type="entry name" value="Recombination protein RecR"/>
    <property type="match status" value="1"/>
</dbReference>
<dbReference type="PROSITE" id="PS01300">
    <property type="entry name" value="RECR"/>
    <property type="match status" value="1"/>
</dbReference>
<dbReference type="PROSITE" id="PS50880">
    <property type="entry name" value="TOPRIM"/>
    <property type="match status" value="1"/>
</dbReference>
<keyword id="KW-0227">DNA damage</keyword>
<keyword id="KW-0233">DNA recombination</keyword>
<keyword id="KW-0234">DNA repair</keyword>
<keyword id="KW-0479">Metal-binding</keyword>
<keyword id="KW-0862">Zinc</keyword>
<keyword id="KW-0863">Zinc-finger</keyword>
<comment type="function">
    <text evidence="1">May play a role in DNA repair. It seems to be involved in an RecBC-independent recombinational process of DNA repair. It may act with RecF and RecO.</text>
</comment>
<comment type="similarity">
    <text evidence="1">Belongs to the RecR family.</text>
</comment>
<evidence type="ECO:0000255" key="1">
    <source>
        <dbReference type="HAMAP-Rule" id="MF_00017"/>
    </source>
</evidence>
<feature type="chain" id="PRO_0000190388" description="Recombination protein RecR">
    <location>
        <begin position="1"/>
        <end position="198"/>
    </location>
</feature>
<feature type="domain" description="Toprim" evidence="1">
    <location>
        <begin position="80"/>
        <end position="175"/>
    </location>
</feature>
<feature type="zinc finger region" description="C4-type" evidence="1">
    <location>
        <begin position="57"/>
        <end position="72"/>
    </location>
</feature>
<reference key="1">
    <citation type="journal article" date="2004" name="Proc. Natl. Acad. Sci. U.S.A.">
        <title>Complete genomes of two clinical Staphylococcus aureus strains: evidence for the rapid evolution of virulence and drug resistance.</title>
        <authorList>
            <person name="Holden M.T.G."/>
            <person name="Feil E.J."/>
            <person name="Lindsay J.A."/>
            <person name="Peacock S.J."/>
            <person name="Day N.P.J."/>
            <person name="Enright M.C."/>
            <person name="Foster T.J."/>
            <person name="Moore C.E."/>
            <person name="Hurst L."/>
            <person name="Atkin R."/>
            <person name="Barron A."/>
            <person name="Bason N."/>
            <person name="Bentley S.D."/>
            <person name="Chillingworth C."/>
            <person name="Chillingworth T."/>
            <person name="Churcher C."/>
            <person name="Clark L."/>
            <person name="Corton C."/>
            <person name="Cronin A."/>
            <person name="Doggett J."/>
            <person name="Dowd L."/>
            <person name="Feltwell T."/>
            <person name="Hance Z."/>
            <person name="Harris B."/>
            <person name="Hauser H."/>
            <person name="Holroyd S."/>
            <person name="Jagels K."/>
            <person name="James K.D."/>
            <person name="Lennard N."/>
            <person name="Line A."/>
            <person name="Mayes R."/>
            <person name="Moule S."/>
            <person name="Mungall K."/>
            <person name="Ormond D."/>
            <person name="Quail M.A."/>
            <person name="Rabbinowitsch E."/>
            <person name="Rutherford K.M."/>
            <person name="Sanders M."/>
            <person name="Sharp S."/>
            <person name="Simmonds M."/>
            <person name="Stevens K."/>
            <person name="Whitehead S."/>
            <person name="Barrell B.G."/>
            <person name="Spratt B.G."/>
            <person name="Parkhill J."/>
        </authorList>
    </citation>
    <scope>NUCLEOTIDE SEQUENCE [LARGE SCALE GENOMIC DNA]</scope>
    <source>
        <strain>MRSA252</strain>
    </source>
</reference>